<proteinExistence type="evidence at protein level"/>
<feature type="chain" id="PRO_0000153285" description="Interferon-related developmental regulator 1">
    <location>
        <begin position="1"/>
        <end position="451"/>
    </location>
</feature>
<feature type="region of interest" description="Disordered" evidence="2">
    <location>
        <begin position="1"/>
        <end position="69"/>
    </location>
</feature>
<feature type="compositionally biased region" description="Basic residues" evidence="2">
    <location>
        <begin position="1"/>
        <end position="10"/>
    </location>
</feature>
<feature type="compositionally biased region" description="Low complexity" evidence="2">
    <location>
        <begin position="23"/>
        <end position="33"/>
    </location>
</feature>
<feature type="compositionally biased region" description="Polar residues" evidence="2">
    <location>
        <begin position="49"/>
        <end position="61"/>
    </location>
</feature>
<feature type="splice variant" id="VSP_044304" description="In isoform 2." evidence="5">
    <location>
        <begin position="1"/>
        <end position="50"/>
    </location>
</feature>
<feature type="sequence variant" id="VAR_064723" description="Found in a renal cell carcinoma sample; somatic mutation." evidence="3">
    <original>Q</original>
    <variation>K</variation>
    <location>
        <position position="39"/>
    </location>
</feature>
<feature type="sequence conflict" description="In Ref. 3; AAV38693." evidence="6" ref="3">
    <original>E</original>
    <variation>D</variation>
    <location>
        <position position="44"/>
    </location>
</feature>
<feature type="sequence conflict" description="In Ref. 1; CAA71366." evidence="6" ref="1">
    <original>L</original>
    <variation>R</variation>
    <location>
        <position position="84"/>
    </location>
</feature>
<feature type="sequence conflict" description="In Ref. 3; AAV38693." evidence="6" ref="3">
    <original>Q</original>
    <variation>R</variation>
    <location>
        <position position="314"/>
    </location>
</feature>
<feature type="sequence conflict" description="In Ref. 1; CAA71366." evidence="6" ref="1">
    <original>HLQSN</original>
    <variation>PLAVKM</variation>
    <location>
        <begin position="388"/>
        <end position="392"/>
    </location>
</feature>
<feature type="sequence conflict" description="In Ref. 1; CAA71366." evidence="6" ref="1">
    <original>R</original>
    <variation>E</variation>
    <location>
        <position position="396"/>
    </location>
</feature>
<feature type="sequence conflict" description="In Ref. 1; CAA71366." evidence="6" ref="1">
    <original>LGPPVMLDAAT</original>
    <variation>TWTPSDALMLQR</variation>
    <location>
        <begin position="401"/>
        <end position="411"/>
    </location>
</feature>
<name>IFRD1_HUMAN</name>
<reference key="1">
    <citation type="journal article" date="1998" name="Genomics">
        <title>Cloning of the human interferon-related developmental regulator (IFRD1) gene coding for the PC4 protein, a member of a novel family of developmentally regulated genes.</title>
        <authorList>
            <person name="Buanne P."/>
            <person name="Incerti B."/>
            <person name="Guardavaccaro D."/>
            <person name="Avvantaggiato V."/>
            <person name="Simeone A."/>
            <person name="Tirone F."/>
        </authorList>
    </citation>
    <scope>NUCLEOTIDE SEQUENCE [MRNA] (ISOFORM 1)</scope>
    <source>
        <tissue>Brain</tissue>
    </source>
</reference>
<reference key="2">
    <citation type="journal article" date="2004" name="Nat. Genet.">
        <title>Complete sequencing and characterization of 21,243 full-length human cDNAs.</title>
        <authorList>
            <person name="Ota T."/>
            <person name="Suzuki Y."/>
            <person name="Nishikawa T."/>
            <person name="Otsuki T."/>
            <person name="Sugiyama T."/>
            <person name="Irie R."/>
            <person name="Wakamatsu A."/>
            <person name="Hayashi K."/>
            <person name="Sato H."/>
            <person name="Nagai K."/>
            <person name="Kimura K."/>
            <person name="Makita H."/>
            <person name="Sekine M."/>
            <person name="Obayashi M."/>
            <person name="Nishi T."/>
            <person name="Shibahara T."/>
            <person name="Tanaka T."/>
            <person name="Ishii S."/>
            <person name="Yamamoto J."/>
            <person name="Saito K."/>
            <person name="Kawai Y."/>
            <person name="Isono Y."/>
            <person name="Nakamura Y."/>
            <person name="Nagahari K."/>
            <person name="Murakami K."/>
            <person name="Yasuda T."/>
            <person name="Iwayanagi T."/>
            <person name="Wagatsuma M."/>
            <person name="Shiratori A."/>
            <person name="Sudo H."/>
            <person name="Hosoiri T."/>
            <person name="Kaku Y."/>
            <person name="Kodaira H."/>
            <person name="Kondo H."/>
            <person name="Sugawara M."/>
            <person name="Takahashi M."/>
            <person name="Kanda K."/>
            <person name="Yokoi T."/>
            <person name="Furuya T."/>
            <person name="Kikkawa E."/>
            <person name="Omura Y."/>
            <person name="Abe K."/>
            <person name="Kamihara K."/>
            <person name="Katsuta N."/>
            <person name="Sato K."/>
            <person name="Tanikawa M."/>
            <person name="Yamazaki M."/>
            <person name="Ninomiya K."/>
            <person name="Ishibashi T."/>
            <person name="Yamashita H."/>
            <person name="Murakawa K."/>
            <person name="Fujimori K."/>
            <person name="Tanai H."/>
            <person name="Kimata M."/>
            <person name="Watanabe M."/>
            <person name="Hiraoka S."/>
            <person name="Chiba Y."/>
            <person name="Ishida S."/>
            <person name="Ono Y."/>
            <person name="Takiguchi S."/>
            <person name="Watanabe S."/>
            <person name="Yosida M."/>
            <person name="Hotuta T."/>
            <person name="Kusano J."/>
            <person name="Kanehori K."/>
            <person name="Takahashi-Fujii A."/>
            <person name="Hara H."/>
            <person name="Tanase T.-O."/>
            <person name="Nomura Y."/>
            <person name="Togiya S."/>
            <person name="Komai F."/>
            <person name="Hara R."/>
            <person name="Takeuchi K."/>
            <person name="Arita M."/>
            <person name="Imose N."/>
            <person name="Musashino K."/>
            <person name="Yuuki H."/>
            <person name="Oshima A."/>
            <person name="Sasaki N."/>
            <person name="Aotsuka S."/>
            <person name="Yoshikawa Y."/>
            <person name="Matsunawa H."/>
            <person name="Ichihara T."/>
            <person name="Shiohata N."/>
            <person name="Sano S."/>
            <person name="Moriya S."/>
            <person name="Momiyama H."/>
            <person name="Satoh N."/>
            <person name="Takami S."/>
            <person name="Terashima Y."/>
            <person name="Suzuki O."/>
            <person name="Nakagawa S."/>
            <person name="Senoh A."/>
            <person name="Mizoguchi H."/>
            <person name="Goto Y."/>
            <person name="Shimizu F."/>
            <person name="Wakebe H."/>
            <person name="Hishigaki H."/>
            <person name="Watanabe T."/>
            <person name="Sugiyama A."/>
            <person name="Takemoto M."/>
            <person name="Kawakami B."/>
            <person name="Yamazaki M."/>
            <person name="Watanabe K."/>
            <person name="Kumagai A."/>
            <person name="Itakura S."/>
            <person name="Fukuzumi Y."/>
            <person name="Fujimori Y."/>
            <person name="Komiyama M."/>
            <person name="Tashiro H."/>
            <person name="Tanigami A."/>
            <person name="Fujiwara T."/>
            <person name="Ono T."/>
            <person name="Yamada K."/>
            <person name="Fujii Y."/>
            <person name="Ozaki K."/>
            <person name="Hirao M."/>
            <person name="Ohmori Y."/>
            <person name="Kawabata A."/>
            <person name="Hikiji T."/>
            <person name="Kobatake N."/>
            <person name="Inagaki H."/>
            <person name="Ikema Y."/>
            <person name="Okamoto S."/>
            <person name="Okitani R."/>
            <person name="Kawakami T."/>
            <person name="Noguchi S."/>
            <person name="Itoh T."/>
            <person name="Shigeta K."/>
            <person name="Senba T."/>
            <person name="Matsumura K."/>
            <person name="Nakajima Y."/>
            <person name="Mizuno T."/>
            <person name="Morinaga M."/>
            <person name="Sasaki M."/>
            <person name="Togashi T."/>
            <person name="Oyama M."/>
            <person name="Hata H."/>
            <person name="Watanabe M."/>
            <person name="Komatsu T."/>
            <person name="Mizushima-Sugano J."/>
            <person name="Satoh T."/>
            <person name="Shirai Y."/>
            <person name="Takahashi Y."/>
            <person name="Nakagawa K."/>
            <person name="Okumura K."/>
            <person name="Nagase T."/>
            <person name="Nomura N."/>
            <person name="Kikuchi H."/>
            <person name="Masuho Y."/>
            <person name="Yamashita R."/>
            <person name="Nakai K."/>
            <person name="Yada T."/>
            <person name="Nakamura Y."/>
            <person name="Ohara O."/>
            <person name="Isogai T."/>
            <person name="Sugano S."/>
        </authorList>
    </citation>
    <scope>NUCLEOTIDE SEQUENCE [LARGE SCALE MRNA] (ISOFORM 2)</scope>
    <source>
        <tissue>Amygdala</tissue>
    </source>
</reference>
<reference key="3">
    <citation type="submission" date="2004-10" db="EMBL/GenBank/DDBJ databases">
        <title>Cloning of human full-length CDSs in BD Creator(TM) system donor vector.</title>
        <authorList>
            <person name="Kalnine N."/>
            <person name="Chen X."/>
            <person name="Rolfs A."/>
            <person name="Halleck A."/>
            <person name="Hines L."/>
            <person name="Eisenstein S."/>
            <person name="Koundinya M."/>
            <person name="Raphael J."/>
            <person name="Moreira D."/>
            <person name="Kelley T."/>
            <person name="LaBaer J."/>
            <person name="Lin Y."/>
            <person name="Phelan M."/>
            <person name="Farmer A."/>
        </authorList>
    </citation>
    <scope>NUCLEOTIDE SEQUENCE [LARGE SCALE MRNA] (ISOFORM 1)</scope>
</reference>
<reference key="4">
    <citation type="journal article" date="2003" name="Nature">
        <title>The DNA sequence of human chromosome 7.</title>
        <authorList>
            <person name="Hillier L.W."/>
            <person name="Fulton R.S."/>
            <person name="Fulton L.A."/>
            <person name="Graves T.A."/>
            <person name="Pepin K.H."/>
            <person name="Wagner-McPherson C."/>
            <person name="Layman D."/>
            <person name="Maas J."/>
            <person name="Jaeger S."/>
            <person name="Walker R."/>
            <person name="Wylie K."/>
            <person name="Sekhon M."/>
            <person name="Becker M.C."/>
            <person name="O'Laughlin M.D."/>
            <person name="Schaller M.E."/>
            <person name="Fewell G.A."/>
            <person name="Delehaunty K.D."/>
            <person name="Miner T.L."/>
            <person name="Nash W.E."/>
            <person name="Cordes M."/>
            <person name="Du H."/>
            <person name="Sun H."/>
            <person name="Edwards J."/>
            <person name="Bradshaw-Cordum H."/>
            <person name="Ali J."/>
            <person name="Andrews S."/>
            <person name="Isak A."/>
            <person name="Vanbrunt A."/>
            <person name="Nguyen C."/>
            <person name="Du F."/>
            <person name="Lamar B."/>
            <person name="Courtney L."/>
            <person name="Kalicki J."/>
            <person name="Ozersky P."/>
            <person name="Bielicki L."/>
            <person name="Scott K."/>
            <person name="Holmes A."/>
            <person name="Harkins R."/>
            <person name="Harris A."/>
            <person name="Strong C.M."/>
            <person name="Hou S."/>
            <person name="Tomlinson C."/>
            <person name="Dauphin-Kohlberg S."/>
            <person name="Kozlowicz-Reilly A."/>
            <person name="Leonard S."/>
            <person name="Rohlfing T."/>
            <person name="Rock S.M."/>
            <person name="Tin-Wollam A.-M."/>
            <person name="Abbott A."/>
            <person name="Minx P."/>
            <person name="Maupin R."/>
            <person name="Strowmatt C."/>
            <person name="Latreille P."/>
            <person name="Miller N."/>
            <person name="Johnson D."/>
            <person name="Murray J."/>
            <person name="Woessner J.P."/>
            <person name="Wendl M.C."/>
            <person name="Yang S.-P."/>
            <person name="Schultz B.R."/>
            <person name="Wallis J.W."/>
            <person name="Spieth J."/>
            <person name="Bieri T.A."/>
            <person name="Nelson J.O."/>
            <person name="Berkowicz N."/>
            <person name="Wohldmann P.E."/>
            <person name="Cook L.L."/>
            <person name="Hickenbotham M.T."/>
            <person name="Eldred J."/>
            <person name="Williams D."/>
            <person name="Bedell J.A."/>
            <person name="Mardis E.R."/>
            <person name="Clifton S.W."/>
            <person name="Chissoe S.L."/>
            <person name="Marra M.A."/>
            <person name="Raymond C."/>
            <person name="Haugen E."/>
            <person name="Gillett W."/>
            <person name="Zhou Y."/>
            <person name="James R."/>
            <person name="Phelps K."/>
            <person name="Iadanoto S."/>
            <person name="Bubb K."/>
            <person name="Simms E."/>
            <person name="Levy R."/>
            <person name="Clendenning J."/>
            <person name="Kaul R."/>
            <person name="Kent W.J."/>
            <person name="Furey T.S."/>
            <person name="Baertsch R.A."/>
            <person name="Brent M.R."/>
            <person name="Keibler E."/>
            <person name="Flicek P."/>
            <person name="Bork P."/>
            <person name="Suyama M."/>
            <person name="Bailey J.A."/>
            <person name="Portnoy M.E."/>
            <person name="Torrents D."/>
            <person name="Chinwalla A.T."/>
            <person name="Gish W.R."/>
            <person name="Eddy S.R."/>
            <person name="McPherson J.D."/>
            <person name="Olson M.V."/>
            <person name="Eichler E.E."/>
            <person name="Green E.D."/>
            <person name="Waterston R.H."/>
            <person name="Wilson R.K."/>
        </authorList>
    </citation>
    <scope>NUCLEOTIDE SEQUENCE [LARGE SCALE GENOMIC DNA]</scope>
</reference>
<reference key="5">
    <citation type="journal article" date="2004" name="Genome Res.">
        <title>The status, quality, and expansion of the NIH full-length cDNA project: the Mammalian Gene Collection (MGC).</title>
        <authorList>
            <consortium name="The MGC Project Team"/>
        </authorList>
    </citation>
    <scope>NUCLEOTIDE SEQUENCE [LARGE SCALE MRNA] (ISOFORM 1)</scope>
    <source>
        <tissue>Cervix</tissue>
    </source>
</reference>
<reference key="6">
    <citation type="journal article" date="1998" name="EMBO J.">
        <title>Isolation of cDNAs encoding novel transcription coactivators p52 and p75 reveals an alternate regulatory mechanism of transcriptional activation.</title>
        <authorList>
            <person name="Ge H."/>
            <person name="Si Y."/>
            <person name="Roeder R.G."/>
        </authorList>
    </citation>
    <scope>INTERACTION WITH PSIP1</scope>
</reference>
<reference key="7">
    <citation type="journal article" date="2011" name="BMC Syst. Biol.">
        <title>Initial characterization of the human central proteome.</title>
        <authorList>
            <person name="Burkard T.R."/>
            <person name="Planyavsky M."/>
            <person name="Kaupe I."/>
            <person name="Breitwieser F.P."/>
            <person name="Buerckstuemmer T."/>
            <person name="Bennett K.L."/>
            <person name="Superti-Furga G."/>
            <person name="Colinge J."/>
        </authorList>
    </citation>
    <scope>IDENTIFICATION BY MASS SPECTROMETRY [LARGE SCALE ANALYSIS]</scope>
</reference>
<reference key="8">
    <citation type="journal article" date="2013" name="J. Proteome Res.">
        <title>Toward a comprehensive characterization of a human cancer cell phosphoproteome.</title>
        <authorList>
            <person name="Zhou H."/>
            <person name="Di Palma S."/>
            <person name="Preisinger C."/>
            <person name="Peng M."/>
            <person name="Polat A.N."/>
            <person name="Heck A.J."/>
            <person name="Mohammed S."/>
        </authorList>
    </citation>
    <scope>IDENTIFICATION BY MASS SPECTROMETRY [LARGE SCALE ANALYSIS]</scope>
    <source>
        <tissue>Erythroleukemia</tissue>
    </source>
</reference>
<reference key="9">
    <citation type="journal article" date="2011" name="Nature">
        <title>Exome sequencing identifies frequent mutation of the SWI/SNF complex gene PBRM1 in renal carcinoma.</title>
        <authorList>
            <person name="Varela I."/>
            <person name="Tarpey P."/>
            <person name="Raine K."/>
            <person name="Huang D."/>
            <person name="Ong C.K."/>
            <person name="Stephens P."/>
            <person name="Davies H."/>
            <person name="Jones D."/>
            <person name="Lin M.L."/>
            <person name="Teague J."/>
            <person name="Bignell G."/>
            <person name="Butler A."/>
            <person name="Cho J."/>
            <person name="Dalgliesh G.L."/>
            <person name="Galappaththige D."/>
            <person name="Greenman C."/>
            <person name="Hardy C."/>
            <person name="Jia M."/>
            <person name="Latimer C."/>
            <person name="Lau K.W."/>
            <person name="Marshall J."/>
            <person name="McLaren S."/>
            <person name="Menzies A."/>
            <person name="Mudie L."/>
            <person name="Stebbings L."/>
            <person name="Largaespada D.A."/>
            <person name="Wessels L.F.A."/>
            <person name="Richard S."/>
            <person name="Kahnoski R.J."/>
            <person name="Anema J."/>
            <person name="Tuveson D.A."/>
            <person name="Perez-Mancera P.A."/>
            <person name="Mustonen V."/>
            <person name="Fischer A."/>
            <person name="Adams D.J."/>
            <person name="Rust A."/>
            <person name="Chan-On W."/>
            <person name="Subimerb C."/>
            <person name="Dykema K."/>
            <person name="Furge K."/>
            <person name="Campbell P.J."/>
            <person name="Teh B.T."/>
            <person name="Stratton M.R."/>
            <person name="Futreal P.A."/>
        </authorList>
    </citation>
    <scope>VARIANT LYS-39</scope>
</reference>
<dbReference type="EMBL" id="Y10313">
    <property type="protein sequence ID" value="CAA71366.1"/>
    <property type="molecule type" value="mRNA"/>
</dbReference>
<dbReference type="EMBL" id="AK298894">
    <property type="protein sequence ID" value="BAH12897.1"/>
    <property type="molecule type" value="mRNA"/>
</dbReference>
<dbReference type="EMBL" id="AK315967">
    <property type="protein sequence ID" value="BAH14338.1"/>
    <property type="molecule type" value="mRNA"/>
</dbReference>
<dbReference type="EMBL" id="BT019889">
    <property type="protein sequence ID" value="AAV38692.1"/>
    <property type="molecule type" value="mRNA"/>
</dbReference>
<dbReference type="EMBL" id="BT019890">
    <property type="protein sequence ID" value="AAV38693.1"/>
    <property type="molecule type" value="mRNA"/>
</dbReference>
<dbReference type="EMBL" id="AC002459">
    <property type="status" value="NOT_ANNOTATED_CDS"/>
    <property type="molecule type" value="Genomic_DNA"/>
</dbReference>
<dbReference type="EMBL" id="AC005192">
    <property type="protein sequence ID" value="AAC24562.1"/>
    <property type="molecule type" value="Genomic_DNA"/>
</dbReference>
<dbReference type="EMBL" id="AC079741">
    <property type="status" value="NOT_ANNOTATED_CDS"/>
    <property type="molecule type" value="Genomic_DNA"/>
</dbReference>
<dbReference type="EMBL" id="BC001272">
    <property type="protein sequence ID" value="AAH01272.1"/>
    <property type="molecule type" value="mRNA"/>
</dbReference>
<dbReference type="CCDS" id="CCDS34736.1">
    <molecule id="O00458-1"/>
</dbReference>
<dbReference type="CCDS" id="CCDS56504.1">
    <molecule id="O00458-2"/>
</dbReference>
<dbReference type="RefSeq" id="NP_001007246.1">
    <molecule id="O00458-1"/>
    <property type="nucleotide sequence ID" value="NM_001007245.3"/>
</dbReference>
<dbReference type="RefSeq" id="NP_001184008.1">
    <molecule id="O00458-2"/>
    <property type="nucleotide sequence ID" value="NM_001197079.2"/>
</dbReference>
<dbReference type="RefSeq" id="NP_001184009.1">
    <molecule id="O00458-2"/>
    <property type="nucleotide sequence ID" value="NM_001197080.2"/>
</dbReference>
<dbReference type="RefSeq" id="NP_001541.2">
    <molecule id="O00458-1"/>
    <property type="nucleotide sequence ID" value="NM_001550.4"/>
</dbReference>
<dbReference type="RefSeq" id="XP_016867640.1">
    <property type="nucleotide sequence ID" value="XM_017012151.1"/>
</dbReference>
<dbReference type="SMR" id="O00458"/>
<dbReference type="BioGRID" id="109697">
    <property type="interactions" value="42"/>
</dbReference>
<dbReference type="FunCoup" id="O00458">
    <property type="interactions" value="2258"/>
</dbReference>
<dbReference type="IntAct" id="O00458">
    <property type="interactions" value="14"/>
</dbReference>
<dbReference type="MINT" id="O00458"/>
<dbReference type="STRING" id="9606.ENSP00000384477"/>
<dbReference type="GlyGen" id="O00458">
    <property type="glycosylation" value="1 site, 1 O-linked glycan (1 site)"/>
</dbReference>
<dbReference type="iPTMnet" id="O00458"/>
<dbReference type="PhosphoSitePlus" id="O00458"/>
<dbReference type="BioMuta" id="IFRD1"/>
<dbReference type="jPOST" id="O00458"/>
<dbReference type="MassIVE" id="O00458"/>
<dbReference type="PaxDb" id="9606-ENSP00000384477"/>
<dbReference type="PeptideAtlas" id="O00458"/>
<dbReference type="ProteomicsDB" id="47909">
    <molecule id="O00458-1"/>
</dbReference>
<dbReference type="ProteomicsDB" id="6690"/>
<dbReference type="Pumba" id="O00458"/>
<dbReference type="Antibodypedia" id="17367">
    <property type="antibodies" value="178 antibodies from 29 providers"/>
</dbReference>
<dbReference type="DNASU" id="3475"/>
<dbReference type="Ensembl" id="ENST00000005558.8">
    <molecule id="O00458-1"/>
    <property type="protein sequence ID" value="ENSP00000005558.4"/>
    <property type="gene ID" value="ENSG00000006652.15"/>
</dbReference>
<dbReference type="Ensembl" id="ENST00000403825.8">
    <molecule id="O00458-1"/>
    <property type="protein sequence ID" value="ENSP00000384477.3"/>
    <property type="gene ID" value="ENSG00000006652.15"/>
</dbReference>
<dbReference type="Ensembl" id="ENST00000535603.5">
    <molecule id="O00458-2"/>
    <property type="protein sequence ID" value="ENSP00000439188.1"/>
    <property type="gene ID" value="ENSG00000006652.15"/>
</dbReference>
<dbReference type="Ensembl" id="ENST00000621379.4">
    <molecule id="O00458-2"/>
    <property type="protein sequence ID" value="ENSP00000483255.1"/>
    <property type="gene ID" value="ENSG00000006652.15"/>
</dbReference>
<dbReference type="Ensembl" id="ENST00000675578.1">
    <molecule id="O00458-1"/>
    <property type="protein sequence ID" value="ENSP00000502336.1"/>
    <property type="gene ID" value="ENSG00000006652.15"/>
</dbReference>
<dbReference type="GeneID" id="3475"/>
<dbReference type="KEGG" id="hsa:3475"/>
<dbReference type="MANE-Select" id="ENST00000403825.8">
    <property type="protein sequence ID" value="ENSP00000384477.3"/>
    <property type="RefSeq nucleotide sequence ID" value="NM_001550.4"/>
    <property type="RefSeq protein sequence ID" value="NP_001541.2"/>
</dbReference>
<dbReference type="UCSC" id="uc003vgh.4">
    <molecule id="O00458-1"/>
    <property type="organism name" value="human"/>
</dbReference>
<dbReference type="AGR" id="HGNC:5456"/>
<dbReference type="CTD" id="3475"/>
<dbReference type="DisGeNET" id="3475"/>
<dbReference type="GeneCards" id="IFRD1"/>
<dbReference type="HGNC" id="HGNC:5456">
    <property type="gene designation" value="IFRD1"/>
</dbReference>
<dbReference type="HPA" id="ENSG00000006652">
    <property type="expression patterns" value="Low tissue specificity"/>
</dbReference>
<dbReference type="MalaCards" id="IFRD1"/>
<dbReference type="MIM" id="603502">
    <property type="type" value="gene"/>
</dbReference>
<dbReference type="neXtProt" id="NX_O00458"/>
<dbReference type="OpenTargets" id="ENSG00000006652"/>
<dbReference type="Orphanet" id="98771">
    <property type="disease" value="Spinocerebellar ataxia type 18"/>
</dbReference>
<dbReference type="PharmGKB" id="PA29691"/>
<dbReference type="VEuPathDB" id="HostDB:ENSG00000006652"/>
<dbReference type="eggNOG" id="KOG2842">
    <property type="taxonomic scope" value="Eukaryota"/>
</dbReference>
<dbReference type="GeneTree" id="ENSGT00390000013347"/>
<dbReference type="HOGENOM" id="CLU_031384_1_0_1"/>
<dbReference type="InParanoid" id="O00458"/>
<dbReference type="OMA" id="EMHLHKF"/>
<dbReference type="OrthoDB" id="686784at2759"/>
<dbReference type="PAN-GO" id="O00458">
    <property type="GO annotations" value="1 GO annotation based on evolutionary models"/>
</dbReference>
<dbReference type="PhylomeDB" id="O00458"/>
<dbReference type="TreeFam" id="TF313638"/>
<dbReference type="PathwayCommons" id="O00458"/>
<dbReference type="SignaLink" id="O00458"/>
<dbReference type="BioGRID-ORCS" id="3475">
    <property type="hits" value="23 hits in 1163 CRISPR screens"/>
</dbReference>
<dbReference type="ChiTaRS" id="IFRD1">
    <property type="organism name" value="human"/>
</dbReference>
<dbReference type="GeneWiki" id="IFRD1"/>
<dbReference type="GenomeRNAi" id="3475"/>
<dbReference type="Pharos" id="O00458">
    <property type="development level" value="Tbio"/>
</dbReference>
<dbReference type="PRO" id="PR:O00458"/>
<dbReference type="Proteomes" id="UP000005640">
    <property type="component" value="Chromosome 7"/>
</dbReference>
<dbReference type="RNAct" id="O00458">
    <property type="molecule type" value="protein"/>
</dbReference>
<dbReference type="Bgee" id="ENSG00000006652">
    <property type="expression patterns" value="Expressed in body of pancreas and 208 other cell types or tissues"/>
</dbReference>
<dbReference type="ExpressionAtlas" id="O00458">
    <property type="expression patterns" value="baseline and differential"/>
</dbReference>
<dbReference type="GO" id="GO:0005634">
    <property type="term" value="C:nucleus"/>
    <property type="evidence" value="ECO:0000318"/>
    <property type="project" value="GO_Central"/>
</dbReference>
<dbReference type="GO" id="GO:0016528">
    <property type="term" value="C:sarcoplasm"/>
    <property type="evidence" value="ECO:0007669"/>
    <property type="project" value="Ensembl"/>
</dbReference>
<dbReference type="GO" id="GO:0060612">
    <property type="term" value="P:adipose tissue development"/>
    <property type="evidence" value="ECO:0007669"/>
    <property type="project" value="Ensembl"/>
</dbReference>
<dbReference type="GO" id="GO:0045444">
    <property type="term" value="P:fat cell differentiation"/>
    <property type="evidence" value="ECO:0007669"/>
    <property type="project" value="Ensembl"/>
</dbReference>
<dbReference type="GO" id="GO:0042692">
    <property type="term" value="P:muscle cell differentiation"/>
    <property type="evidence" value="ECO:0007669"/>
    <property type="project" value="Ensembl"/>
</dbReference>
<dbReference type="GO" id="GO:0007518">
    <property type="term" value="P:myoblast fate determination"/>
    <property type="evidence" value="ECO:0000304"/>
    <property type="project" value="ProtInc"/>
</dbReference>
<dbReference type="GO" id="GO:0030517">
    <property type="term" value="P:negative regulation of axon extension"/>
    <property type="evidence" value="ECO:0007669"/>
    <property type="project" value="Ensembl"/>
</dbReference>
<dbReference type="GO" id="GO:0048671">
    <property type="term" value="P:negative regulation of collateral sprouting"/>
    <property type="evidence" value="ECO:0007669"/>
    <property type="project" value="Ensembl"/>
</dbReference>
<dbReference type="GO" id="GO:0006357">
    <property type="term" value="P:regulation of transcription by RNA polymerase II"/>
    <property type="evidence" value="ECO:0007669"/>
    <property type="project" value="Ensembl"/>
</dbReference>
<dbReference type="GO" id="GO:0043403">
    <property type="term" value="P:skeletal muscle tissue regeneration"/>
    <property type="evidence" value="ECO:0007669"/>
    <property type="project" value="Ensembl"/>
</dbReference>
<dbReference type="GO" id="GO:0014706">
    <property type="term" value="P:striated muscle tissue development"/>
    <property type="evidence" value="ECO:0007669"/>
    <property type="project" value="Ensembl"/>
</dbReference>
<dbReference type="GO" id="GO:0016055">
    <property type="term" value="P:Wnt signaling pathway"/>
    <property type="evidence" value="ECO:0007669"/>
    <property type="project" value="Ensembl"/>
</dbReference>
<dbReference type="FunFam" id="1.25.10.10:FF:000259">
    <property type="entry name" value="interferon-related developmental regulator 1"/>
    <property type="match status" value="1"/>
</dbReference>
<dbReference type="Gene3D" id="1.25.10.10">
    <property type="entry name" value="Leucine-rich Repeat Variant"/>
    <property type="match status" value="1"/>
</dbReference>
<dbReference type="InterPro" id="IPR011989">
    <property type="entry name" value="ARM-like"/>
</dbReference>
<dbReference type="InterPro" id="IPR016024">
    <property type="entry name" value="ARM-type_fold"/>
</dbReference>
<dbReference type="InterPro" id="IPR039777">
    <property type="entry name" value="IFRD"/>
</dbReference>
<dbReference type="InterPro" id="IPR006921">
    <property type="entry name" value="Interferon-rel_develop_reg_C"/>
</dbReference>
<dbReference type="InterPro" id="IPR007701">
    <property type="entry name" value="Interferon-rel_develop_reg_N"/>
</dbReference>
<dbReference type="PANTHER" id="PTHR12354">
    <property type="entry name" value="INTERFERON-RELATED DEVELOPMENTAL REGULATOR"/>
    <property type="match status" value="1"/>
</dbReference>
<dbReference type="PANTHER" id="PTHR12354:SF6">
    <property type="entry name" value="INTERFERON-RELATED DEVELOPMENTAL REGULATOR 1"/>
    <property type="match status" value="1"/>
</dbReference>
<dbReference type="Pfam" id="PF05004">
    <property type="entry name" value="IFRD"/>
    <property type="match status" value="1"/>
</dbReference>
<dbReference type="Pfam" id="PF04836">
    <property type="entry name" value="IFRD_C"/>
    <property type="match status" value="1"/>
</dbReference>
<dbReference type="SUPFAM" id="SSF48371">
    <property type="entry name" value="ARM repeat"/>
    <property type="match status" value="1"/>
</dbReference>
<gene>
    <name type="primary">IFRD1</name>
</gene>
<keyword id="KW-0025">Alternative splicing</keyword>
<keyword id="KW-0217">Developmental protein</keyword>
<keyword id="KW-0221">Differentiation</keyword>
<keyword id="KW-1267">Proteomics identification</keyword>
<keyword id="KW-1185">Reference proteome</keyword>
<accession>O00458</accession>
<accession>B7Z5G1</accession>
<accession>O75234</accession>
<accession>Q5U013</accession>
<accession>Q9BVE4</accession>
<evidence type="ECO:0000250" key="1"/>
<evidence type="ECO:0000256" key="2">
    <source>
        <dbReference type="SAM" id="MobiDB-lite"/>
    </source>
</evidence>
<evidence type="ECO:0000269" key="3">
    <source>
    </source>
</evidence>
<evidence type="ECO:0000269" key="4">
    <source>
    </source>
</evidence>
<evidence type="ECO:0000303" key="5">
    <source>
    </source>
</evidence>
<evidence type="ECO:0000305" key="6"/>
<sequence>MPKNKKRNTPHRGSSAGGGGSGAAAATAATAGGQHRNVQPFSDEDASIETMSHCSGYSDPSSFAEDGPEVLDEEGTQEDLEYKLKGLIDLTLDKSAKTRQAALEGIKNALASKMLYEFILERRMTLTDSIERCLKKGKSDEQRAAAALASVLCIQLGPGIESEEILKTLGPILKKIICDGSASMQARQTCATCFGVCCFIATDDITELYSTLECLENIFTKSYLKEKDTTVICSTPNTVLHISSLLAWTLLLTICPINEVKKKLEMHFHKLPSLLSCDDVNMRIAAGESLALLFELARGIESDFFYEDMESLTQMLRALATDGNKHRAKVDKRKQRSVFRDVLRAVEERDFPTETIKFGPERMYIDCWVKKHTYDTFKEVLGSGMQYHLQSNEFLRNVFELGPPVMLDAATLKTMKISRFERHLYNSAAFKARTKARSKCRDKRADVGEFF</sequence>
<comment type="function">
    <text evidence="1">Could play a role in regulating gene activity in the proliferative and/or differentiative pathways induced by NGF. May be an autocrine factor that attenuates or amplifies the initial ligand-induced signal (By similarity).</text>
</comment>
<comment type="subunit">
    <text evidence="4">Interacts with PSIP1/LEDGF.</text>
</comment>
<comment type="alternative products">
    <event type="alternative splicing"/>
    <isoform>
        <id>O00458-1</id>
        <name>1</name>
        <sequence type="displayed"/>
    </isoform>
    <isoform>
        <id>O00458-2</id>
        <name>2</name>
        <sequence type="described" ref="VSP_044304"/>
    </isoform>
</comment>
<comment type="tissue specificity">
    <text>Expressed in a variety of tissues.</text>
</comment>
<comment type="similarity">
    <text evidence="6">Belongs to the IFRD family.</text>
</comment>
<protein>
    <recommendedName>
        <fullName>Interferon-related developmental regulator 1</fullName>
    </recommendedName>
    <alternativeName>
        <fullName>Nerve growth factor-inducible protein PC4</fullName>
    </alternativeName>
</protein>
<organism>
    <name type="scientific">Homo sapiens</name>
    <name type="common">Human</name>
    <dbReference type="NCBI Taxonomy" id="9606"/>
    <lineage>
        <taxon>Eukaryota</taxon>
        <taxon>Metazoa</taxon>
        <taxon>Chordata</taxon>
        <taxon>Craniata</taxon>
        <taxon>Vertebrata</taxon>
        <taxon>Euteleostomi</taxon>
        <taxon>Mammalia</taxon>
        <taxon>Eutheria</taxon>
        <taxon>Euarchontoglires</taxon>
        <taxon>Primates</taxon>
        <taxon>Haplorrhini</taxon>
        <taxon>Catarrhini</taxon>
        <taxon>Hominidae</taxon>
        <taxon>Homo</taxon>
    </lineage>
</organism>